<protein>
    <recommendedName>
        <fullName>Protein fuzzy homolog</fullName>
    </recommendedName>
    <alternativeName>
        <fullName>Xfy</fullName>
    </alternativeName>
</protein>
<evidence type="ECO:0000250" key="1">
    <source>
        <dbReference type="UniProtKB" id="Q3UYI6"/>
    </source>
</evidence>
<evidence type="ECO:0000269" key="2">
    <source>
    </source>
</evidence>
<evidence type="ECO:0000269" key="3">
    <source>
    </source>
</evidence>
<evidence type="ECO:0000305" key="4"/>
<dbReference type="EMBL" id="DQ357248">
    <property type="protein sequence ID" value="ABC86957.1"/>
    <property type="molecule type" value="mRNA"/>
</dbReference>
<dbReference type="RefSeq" id="NP_001035106.1">
    <property type="nucleotide sequence ID" value="NM_001040017.2"/>
</dbReference>
<dbReference type="SMR" id="Q2HZX7"/>
<dbReference type="FunCoup" id="Q2HZX7">
    <property type="interactions" value="215"/>
</dbReference>
<dbReference type="IntAct" id="Q2HZX7">
    <property type="interactions" value="1"/>
</dbReference>
<dbReference type="STRING" id="8364.ENSXETP00000034153"/>
<dbReference type="PaxDb" id="8364-ENSXETP00000006312"/>
<dbReference type="GeneID" id="677733"/>
<dbReference type="KEGG" id="xtr:677733"/>
<dbReference type="AGR" id="Xenbase:XB-GENE-920644"/>
<dbReference type="CTD" id="80199"/>
<dbReference type="Xenbase" id="XB-GENE-920644">
    <property type="gene designation" value="fuz"/>
</dbReference>
<dbReference type="eggNOG" id="ENOG502QVMY">
    <property type="taxonomic scope" value="Eukaryota"/>
</dbReference>
<dbReference type="HOGENOM" id="CLU_041212_1_0_1"/>
<dbReference type="InParanoid" id="Q2HZX7"/>
<dbReference type="OMA" id="LDQYSCS"/>
<dbReference type="OrthoDB" id="74835at2759"/>
<dbReference type="PhylomeDB" id="Q2HZX7"/>
<dbReference type="TreeFam" id="TF324763"/>
<dbReference type="Reactome" id="R-XTR-5610787">
    <property type="pathway name" value="Hedgehog 'off' state"/>
</dbReference>
<dbReference type="Proteomes" id="UP000008143">
    <property type="component" value="Chromosome 7"/>
</dbReference>
<dbReference type="GO" id="GO:0042995">
    <property type="term" value="C:cell projection"/>
    <property type="evidence" value="ECO:0007669"/>
    <property type="project" value="UniProtKB-KW"/>
</dbReference>
<dbReference type="GO" id="GO:0005737">
    <property type="term" value="C:cytoplasm"/>
    <property type="evidence" value="ECO:0007669"/>
    <property type="project" value="UniProtKB-SubCell"/>
</dbReference>
<dbReference type="GO" id="GO:0005856">
    <property type="term" value="C:cytoskeleton"/>
    <property type="evidence" value="ECO:0007669"/>
    <property type="project" value="UniProtKB-SubCell"/>
</dbReference>
<dbReference type="GO" id="GO:0060271">
    <property type="term" value="P:cilium assembly"/>
    <property type="evidence" value="ECO:0000250"/>
    <property type="project" value="UniProtKB"/>
</dbReference>
<dbReference type="GO" id="GO:0010172">
    <property type="term" value="P:embryonic body morphogenesis"/>
    <property type="evidence" value="ECO:0000250"/>
    <property type="project" value="UniProtKB"/>
</dbReference>
<dbReference type="GO" id="GO:0048704">
    <property type="term" value="P:embryonic skeletal system morphogenesis"/>
    <property type="evidence" value="ECO:0000250"/>
    <property type="project" value="UniProtKB"/>
</dbReference>
<dbReference type="GO" id="GO:0001736">
    <property type="term" value="P:establishment of planar polarity"/>
    <property type="evidence" value="ECO:0000250"/>
    <property type="project" value="UniProtKB"/>
</dbReference>
<dbReference type="GO" id="GO:0001843">
    <property type="term" value="P:neural tube closure"/>
    <property type="evidence" value="ECO:0000250"/>
    <property type="project" value="UniProtKB"/>
</dbReference>
<dbReference type="GO" id="GO:0015031">
    <property type="term" value="P:protein transport"/>
    <property type="evidence" value="ECO:0007669"/>
    <property type="project" value="UniProtKB-KW"/>
</dbReference>
<dbReference type="GO" id="GO:0008589">
    <property type="term" value="P:regulation of smoothened signaling pathway"/>
    <property type="evidence" value="ECO:0000250"/>
    <property type="project" value="UniProtKB"/>
</dbReference>
<dbReference type="GO" id="GO:0016192">
    <property type="term" value="P:vesicle-mediated transport"/>
    <property type="evidence" value="ECO:0007669"/>
    <property type="project" value="InterPro"/>
</dbReference>
<dbReference type="CDD" id="cd21091">
    <property type="entry name" value="Fuzzy"/>
    <property type="match status" value="1"/>
</dbReference>
<dbReference type="InterPro" id="IPR043972">
    <property type="entry name" value="FUZ/MON1/HPS1_longin_1"/>
</dbReference>
<dbReference type="InterPro" id="IPR043971">
    <property type="entry name" value="FUZ/MON1/HPS1_longin_2"/>
</dbReference>
<dbReference type="InterPro" id="IPR043970">
    <property type="entry name" value="FUZ/MON1/HPS1_longin_3"/>
</dbReference>
<dbReference type="InterPro" id="IPR026069">
    <property type="entry name" value="Fuzzy"/>
</dbReference>
<dbReference type="PANTHER" id="PTHR13559">
    <property type="entry name" value="INTRACELLULAR TRAFFIC PROTEIN-RELATED"/>
    <property type="match status" value="1"/>
</dbReference>
<dbReference type="PANTHER" id="PTHR13559:SF1">
    <property type="entry name" value="PROTEIN FUZZY HOMOLOG"/>
    <property type="match status" value="1"/>
</dbReference>
<dbReference type="Pfam" id="PF19036">
    <property type="entry name" value="Fuz_longin_1"/>
    <property type="match status" value="1"/>
</dbReference>
<dbReference type="Pfam" id="PF19037">
    <property type="entry name" value="Fuz_longin_2"/>
    <property type="match status" value="1"/>
</dbReference>
<dbReference type="Pfam" id="PF19038">
    <property type="entry name" value="Fuz_longin_3"/>
    <property type="match status" value="1"/>
</dbReference>
<comment type="function">
    <text evidence="2">Probable planar cell polarity effector involved in cilium biogenesis. Proposed to function as core component of the CPLANE (ciliogenesis and planar polarity effectors) complex involved in the recruitment of peripheral IFT-A proteins to basal bodies. May regulate protein and membrane transport to the cilium. May control the organization of the apical actin cytoskeleton, which is essential for the normal orientation of elongating ciliary microtubules.</text>
</comment>
<comment type="subunit">
    <text evidence="1 3">Interacts with rsg1 (PubMed:19767740). Interacts with intu and wdpcp; fuz, intu and wdpcp probably form the core CPLANE (ciliogenesis and planar polarity effectors) complex (By similarity).</text>
</comment>
<comment type="subcellular location">
    <subcellularLocation>
        <location evidence="4">Cytoplasm</location>
    </subcellularLocation>
    <subcellularLocation>
        <location evidence="4">Cytoplasm</location>
        <location evidence="4">Cytoskeleton</location>
    </subcellularLocation>
    <subcellularLocation>
        <location evidence="1">Cytoplasm</location>
        <location evidence="1">Cytoskeleton</location>
        <location evidence="1">Cilium basal body</location>
    </subcellularLocation>
</comment>
<comment type="developmental stage">
    <text evidence="2">Expressed in the neural tube closure, with strongest expression in the floorplate. Expressed in ciliated epidermal cells.</text>
</comment>
<comment type="miscellaneous">
    <text>Knockdown of fy disrupted Hedgehog signaling and caused defects in neural tube closure, including exencephaly, spina bifida, and holoprosencephaly-like features.</text>
</comment>
<comment type="similarity">
    <text evidence="4">Belongs to the fuzzy family.</text>
</comment>
<sequence>MEDSSVFLLCLAASSGVPLYSRSKGSSRQLTFSVIGSLNGVHMFASNQDVLLTSTCTENTRVAWRAFHDSITLIVMSSESGASKLSLNRLLENVFNAMVLVIGLDDLVNIKNVERLKKDLRACYRLIDSFLLETEKMGDLTQCVDCVIAYDVPILQECLDNFTQAAESNFGCLMAGGKVVVATEKWWRLSSQEVMLLCWLVASLAPHSSRDYPVYLPQGSPTVPHRLLTFQLVPGVDVCVLCGPKPSLQKVETELIERFWKPVHDPIKSCLRVQMRSFPASVPLHHGILGLLLINRDMNKSLYTVQAHPMEEMQKTDLKLTLEQRRSALRSFYTLAMSRYFPSERADGKNTLPSEESFQSGFSHSAHQCYTISSSCKCYGMKTELHLLFLLLKPEVPTFSMRSIANKTIAAFTKDFPF</sequence>
<reference key="1">
    <citation type="journal article" date="2006" name="Nat. Genet.">
        <title>Ciliogenesis defects in embryos lacking inturned or fuzzy function are associated with failure of planar cell polarity and Hedgehog signaling.</title>
        <authorList>
            <person name="Park T.J."/>
            <person name="Haigo S.L."/>
            <person name="Wallingford J.B."/>
        </authorList>
    </citation>
    <scope>NUCLEOTIDE SEQUENCE [MRNA]</scope>
    <scope>FUNCTION</scope>
    <scope>DEVELOPMENTAL STAGE</scope>
</reference>
<reference key="2">
    <citation type="journal article" date="2009" name="Nat. Cell Biol.">
        <title>The planar cell polarity effector Fuz is essential for targeted membrane trafficking, ciliogenesis and mouse embryonic development.</title>
        <authorList>
            <person name="Gray R.S."/>
            <person name="Abitua P.B."/>
            <person name="Wlodarczyk B.J."/>
            <person name="Szabo-Rogers H.L."/>
            <person name="Blanchard O."/>
            <person name="Lee I."/>
            <person name="Weiss G.S."/>
            <person name="Liu K.J."/>
            <person name="Marcotte E.M."/>
            <person name="Wallingford J.B."/>
            <person name="Finnell R.H."/>
        </authorList>
    </citation>
    <scope>INTERACTION WITH RSG1</scope>
</reference>
<gene>
    <name type="primary">fuz</name>
    <name type="synonym">fuzzy</name>
    <name type="synonym">fy</name>
</gene>
<accession>Q2HZX7</accession>
<organism>
    <name type="scientific">Xenopus tropicalis</name>
    <name type="common">Western clawed frog</name>
    <name type="synonym">Silurana tropicalis</name>
    <dbReference type="NCBI Taxonomy" id="8364"/>
    <lineage>
        <taxon>Eukaryota</taxon>
        <taxon>Metazoa</taxon>
        <taxon>Chordata</taxon>
        <taxon>Craniata</taxon>
        <taxon>Vertebrata</taxon>
        <taxon>Euteleostomi</taxon>
        <taxon>Amphibia</taxon>
        <taxon>Batrachia</taxon>
        <taxon>Anura</taxon>
        <taxon>Pipoidea</taxon>
        <taxon>Pipidae</taxon>
        <taxon>Xenopodinae</taxon>
        <taxon>Xenopus</taxon>
        <taxon>Silurana</taxon>
    </lineage>
</organism>
<name>FUZZY_XENTR</name>
<feature type="chain" id="PRO_0000312923" description="Protein fuzzy homolog">
    <location>
        <begin position="1"/>
        <end position="418"/>
    </location>
</feature>
<proteinExistence type="evidence at protein level"/>
<keyword id="KW-0966">Cell projection</keyword>
<keyword id="KW-0970">Cilium biogenesis/degradation</keyword>
<keyword id="KW-0963">Cytoplasm</keyword>
<keyword id="KW-0206">Cytoskeleton</keyword>
<keyword id="KW-0217">Developmental protein</keyword>
<keyword id="KW-0653">Protein transport</keyword>
<keyword id="KW-1185">Reference proteome</keyword>
<keyword id="KW-0813">Transport</keyword>